<keyword id="KW-0903">Direct protein sequencing</keyword>
<keyword id="KW-1015">Disulfide bond</keyword>
<keyword id="KW-0301">Gamma-carboxyglutamic acid</keyword>
<keyword id="KW-0325">Glycoprotein</keyword>
<keyword id="KW-0597">Phosphoprotein</keyword>
<keyword id="KW-0646">Protease inhibitor</keyword>
<keyword id="KW-0654">Proteoglycan</keyword>
<keyword id="KW-1267">Proteomics identification</keyword>
<keyword id="KW-1185">Reference proteome</keyword>
<keyword id="KW-0964">Secreted</keyword>
<keyword id="KW-0722">Serine protease inhibitor</keyword>
<keyword id="KW-0732">Signal</keyword>
<feature type="signal peptide" evidence="2">
    <location>
        <begin position="1"/>
        <end position="18"/>
    </location>
</feature>
<feature type="propeptide" id="PRO_0000016517">
    <location>
        <begin position="19"/>
        <end position="54"/>
    </location>
</feature>
<feature type="chain" id="PRO_0000016518" description="Inter-alpha-trypsin inhibitor heavy chain H2">
    <location>
        <begin position="55"/>
        <end position="702"/>
    </location>
</feature>
<feature type="propeptide" id="PRO_0000016519">
    <location>
        <begin position="703"/>
        <end position="946"/>
    </location>
</feature>
<feature type="domain" description="VIT" evidence="4">
    <location>
        <begin position="56"/>
        <end position="185"/>
    </location>
</feature>
<feature type="domain" description="VWFA" evidence="3">
    <location>
        <begin position="308"/>
        <end position="468"/>
    </location>
</feature>
<feature type="region of interest" description="O-glycosylated at three sites">
    <location>
        <begin position="665"/>
        <end position="679"/>
    </location>
</feature>
<feature type="modified residue" description="Phosphoserine; by FAM20C" evidence="12 17">
    <location>
        <position position="60"/>
    </location>
</feature>
<feature type="modified residue" description="4-carboxyglutamate" evidence="9">
    <location>
        <position position="282"/>
    </location>
</feature>
<feature type="modified residue" description="4-carboxyglutamate" evidence="9">
    <location>
        <position position="283"/>
    </location>
</feature>
<feature type="modified residue" description="Phosphoserine; by FAM20C" evidence="12">
    <location>
        <position position="466"/>
    </location>
</feature>
<feature type="modified residue" description="Aspartate 1-(chondroitin 4-sulfate)-ester">
    <location>
        <position position="702"/>
    </location>
</feature>
<feature type="modified residue" description="Phosphoserine; by FAM20C" evidence="12">
    <location>
        <position position="886"/>
    </location>
</feature>
<feature type="glycosylation site" id="CAR_000140" description="N-linked (GlcNAc...) (complex) asparagine" evidence="5 6 7 14 15">
    <location>
        <position position="118"/>
    </location>
</feature>
<feature type="glycosylation site" description="N-linked (GlcNAc...) asparagine" evidence="6">
    <location>
        <position position="445"/>
    </location>
</feature>
<feature type="glycosylation site" id="CAR_000214" description="O-linked (GalNAc...) threonine; partial" evidence="14 15">
    <location>
        <position position="666"/>
    </location>
</feature>
<feature type="glycosylation site" id="CAR_000215" description="O-linked (GalNAc...) serine" evidence="14 15">
    <location>
        <position position="673"/>
    </location>
</feature>
<feature type="glycosylation site" id="CAR_000216" description="O-linked (GalNAc...) threonine" evidence="14 15">
    <location>
        <position position="675"/>
    </location>
</feature>
<feature type="glycosylation site" id="CAR_000217" description="O-linked (GalNAc...) threonine" evidence="13 14 15">
    <location>
        <position position="691"/>
    </location>
</feature>
<feature type="disulfide bond" evidence="14">
    <location>
        <begin position="261"/>
        <end position="264"/>
    </location>
</feature>
<feature type="disulfide bond" evidence="14">
    <location>
        <begin position="650"/>
        <end position="651"/>
    </location>
</feature>
<feature type="sequence variant" id="VAR_055248" description="In dbSNP:rs7075296." evidence="9">
    <original>N</original>
    <variation>S</variation>
    <location>
        <position position="263"/>
    </location>
</feature>
<feature type="sequence variant" id="VAR_055249" description="In dbSNP:rs7084817.">
    <original>L</original>
    <variation>V</variation>
    <location>
        <position position="569"/>
    </location>
</feature>
<feature type="sequence variant" id="VAR_055250" description="In dbSNP:rs3740217." evidence="10">
    <original>P</original>
    <variation>A</variation>
    <location>
        <position position="674"/>
    </location>
</feature>
<feature type="sequence conflict" description="In Ref. 6; AA sequence." evidence="16" ref="6">
    <original>K</original>
    <variation>L</variation>
    <location>
        <position position="374"/>
    </location>
</feature>
<feature type="sequence conflict" description="In Ref. 3; AAA60558 and 4; AAA59195." evidence="16" ref="3 4">
    <original>F</original>
    <variation>S</variation>
    <location>
        <position position="705"/>
    </location>
</feature>
<feature type="sequence conflict" description="In Ref. 3; AAA60558 and 4; AAA59195." evidence="16" ref="3 4">
    <original>N</original>
    <variation>D</variation>
    <location>
        <position position="729"/>
    </location>
</feature>
<feature type="sequence conflict" description="In Ref. 3; AAA60558 and 4; AAA59195." evidence="16" ref="3 4">
    <original>V</original>
    <variation>A</variation>
    <location>
        <position position="731"/>
    </location>
</feature>
<accession>P19823</accession>
<accession>Q14659</accession>
<accession>Q15484</accession>
<accession>Q5T986</accession>
<proteinExistence type="evidence at protein level"/>
<reference key="1">
    <citation type="journal article" date="1988" name="FEBS Lett.">
        <title>Complementary DNA and derived amino acid sequence of the precursor of one of the three protein components of the inter-alpha-trypsin inhibitor complex.</title>
        <authorList>
            <person name="Gebhard W."/>
            <person name="Schreitmueller T."/>
            <person name="Hochstrasser K."/>
            <person name="Wachter E."/>
        </authorList>
    </citation>
    <scope>NUCLEOTIDE SEQUENCE [MRNA]</scope>
    <scope>PARTIAL PROTEIN SEQUENCE</scope>
    <scope>GAMMA-CARBOXYGLUTAMATION AT GLU-282 AND GLU-283</scope>
    <scope>VARIANT SER-263</scope>
</reference>
<reference key="2">
    <citation type="journal article" date="2004" name="Nature">
        <title>The DNA sequence and comparative analysis of human chromosome 10.</title>
        <authorList>
            <person name="Deloukas P."/>
            <person name="Earthrowl M.E."/>
            <person name="Grafham D.V."/>
            <person name="Rubenfield M."/>
            <person name="French L."/>
            <person name="Steward C.A."/>
            <person name="Sims S.K."/>
            <person name="Jones M.C."/>
            <person name="Searle S."/>
            <person name="Scott C."/>
            <person name="Howe K."/>
            <person name="Hunt S.E."/>
            <person name="Andrews T.D."/>
            <person name="Gilbert J.G.R."/>
            <person name="Swarbreck D."/>
            <person name="Ashurst J.L."/>
            <person name="Taylor A."/>
            <person name="Battles J."/>
            <person name="Bird C.P."/>
            <person name="Ainscough R."/>
            <person name="Almeida J.P."/>
            <person name="Ashwell R.I.S."/>
            <person name="Ambrose K.D."/>
            <person name="Babbage A.K."/>
            <person name="Bagguley C.L."/>
            <person name="Bailey J."/>
            <person name="Banerjee R."/>
            <person name="Bates K."/>
            <person name="Beasley H."/>
            <person name="Bray-Allen S."/>
            <person name="Brown A.J."/>
            <person name="Brown J.Y."/>
            <person name="Burford D.C."/>
            <person name="Burrill W."/>
            <person name="Burton J."/>
            <person name="Cahill P."/>
            <person name="Camire D."/>
            <person name="Carter N.P."/>
            <person name="Chapman J.C."/>
            <person name="Clark S.Y."/>
            <person name="Clarke G."/>
            <person name="Clee C.M."/>
            <person name="Clegg S."/>
            <person name="Corby N."/>
            <person name="Coulson A."/>
            <person name="Dhami P."/>
            <person name="Dutta I."/>
            <person name="Dunn M."/>
            <person name="Faulkner L."/>
            <person name="Frankish A."/>
            <person name="Frankland J.A."/>
            <person name="Garner P."/>
            <person name="Garnett J."/>
            <person name="Gribble S."/>
            <person name="Griffiths C."/>
            <person name="Grocock R."/>
            <person name="Gustafson E."/>
            <person name="Hammond S."/>
            <person name="Harley J.L."/>
            <person name="Hart E."/>
            <person name="Heath P.D."/>
            <person name="Ho T.P."/>
            <person name="Hopkins B."/>
            <person name="Horne J."/>
            <person name="Howden P.J."/>
            <person name="Huckle E."/>
            <person name="Hynds C."/>
            <person name="Johnson C."/>
            <person name="Johnson D."/>
            <person name="Kana A."/>
            <person name="Kay M."/>
            <person name="Kimberley A.M."/>
            <person name="Kershaw J.K."/>
            <person name="Kokkinaki M."/>
            <person name="Laird G.K."/>
            <person name="Lawlor S."/>
            <person name="Lee H.M."/>
            <person name="Leongamornlert D.A."/>
            <person name="Laird G."/>
            <person name="Lloyd C."/>
            <person name="Lloyd D.M."/>
            <person name="Loveland J."/>
            <person name="Lovell J."/>
            <person name="McLaren S."/>
            <person name="McLay K.E."/>
            <person name="McMurray A."/>
            <person name="Mashreghi-Mohammadi M."/>
            <person name="Matthews L."/>
            <person name="Milne S."/>
            <person name="Nickerson T."/>
            <person name="Nguyen M."/>
            <person name="Overton-Larty E."/>
            <person name="Palmer S.A."/>
            <person name="Pearce A.V."/>
            <person name="Peck A.I."/>
            <person name="Pelan S."/>
            <person name="Phillimore B."/>
            <person name="Porter K."/>
            <person name="Rice C.M."/>
            <person name="Rogosin A."/>
            <person name="Ross M.T."/>
            <person name="Sarafidou T."/>
            <person name="Sehra H.K."/>
            <person name="Shownkeen R."/>
            <person name="Skuce C.D."/>
            <person name="Smith M."/>
            <person name="Standring L."/>
            <person name="Sycamore N."/>
            <person name="Tester J."/>
            <person name="Thorpe A."/>
            <person name="Torcasso W."/>
            <person name="Tracey A."/>
            <person name="Tromans A."/>
            <person name="Tsolas J."/>
            <person name="Wall M."/>
            <person name="Walsh J."/>
            <person name="Wang H."/>
            <person name="Weinstock K."/>
            <person name="West A.P."/>
            <person name="Willey D.L."/>
            <person name="Whitehead S.L."/>
            <person name="Wilming L."/>
            <person name="Wray P.W."/>
            <person name="Young L."/>
            <person name="Chen Y."/>
            <person name="Lovering R.C."/>
            <person name="Moschonas N.K."/>
            <person name="Siebert R."/>
            <person name="Fechtel K."/>
            <person name="Bentley D."/>
            <person name="Durbin R.M."/>
            <person name="Hubbard T."/>
            <person name="Doucette-Stamm L."/>
            <person name="Beck S."/>
            <person name="Smith D.R."/>
            <person name="Rogers J."/>
        </authorList>
    </citation>
    <scope>NUCLEOTIDE SEQUENCE [LARGE SCALE GENOMIC DNA]</scope>
</reference>
<reference key="3">
    <citation type="journal article" date="1987" name="Proc. Natl. Acad. Sci. U.S.A.">
        <title>Isolation and characterization of cDNAs encoding the heavy chain of human inter-alpha-trypsin inhibitor (I alpha TI): unambiguous evidence for multipolypeptide chain structure of I alpha TI.</title>
        <authorList>
            <person name="Salier J.-P."/>
            <person name="Diarra-Mehrpour M."/>
            <person name="Sesboue R."/>
            <person name="Bourguignon J."/>
            <person name="Benarous R."/>
            <person name="Ohkubo I."/>
            <person name="Kurachi S."/>
            <person name="Kurachi K."/>
            <person name="Martin J.-P."/>
        </authorList>
    </citation>
    <scope>NUCLEOTIDE SEQUENCE [MRNA] OF 384-865</scope>
</reference>
<reference key="4">
    <citation type="journal article" date="1988" name="Biol. Chem. Hoppe-Seyler">
        <title>Human inter-alpha-trypsin inhibitor. Isolation and characterization of heavy (H) chain cDNA clones coding for a 383 amino-acid sequence of the H chain.</title>
        <authorList>
            <person name="Salier J.-P."/>
            <person name="Diarra-Mehrpour M."/>
            <person name="Sesboue R."/>
            <person name="Bourguignon J."/>
            <person name="Martin J.-P."/>
        </authorList>
    </citation>
    <scope>NUCLEOTIDE SEQUENCE [MRNA] OF 384-766</scope>
    <scope>VARIANT ALA-674</scope>
</reference>
<reference key="5">
    <citation type="journal article" date="1987" name="Biol. Chem. Hoppe-Seyler">
        <title>cDNA cloning of human inter-alpha-trypsin inhibitor discloses three different proteins.</title>
        <authorList>
            <person name="Schreitmueller T."/>
            <person name="Hochstrasser K."/>
            <person name="Resinger P.W.M."/>
            <person name="Wachter E."/>
            <person name="Gebhard W."/>
        </authorList>
    </citation>
    <scope>PARTIAL NUCLEOTIDE SEQUENCE [MRNA]</scope>
    <source>
        <tissue>Liver</tissue>
    </source>
</reference>
<reference key="6">
    <citation type="journal article" date="1989" name="J. Biol. Chem.">
        <title>Analysis of inter-alpha-trypsin inhibitor and a novel trypsin inhibitor, pre-alpha-trypsin inhibitor, from human plasma. Polypeptide chain stoichiometry and assembly by glycan.</title>
        <authorList>
            <person name="Enghild J.J."/>
            <person name="Thoegersen I.B."/>
            <person name="Pizzo S.V."/>
            <person name="Salvesen G."/>
        </authorList>
    </citation>
    <scope>PROTEIN SEQUENCE OF 55-74; 116-127; 224-246; 295-307 AND 365-385</scope>
    <scope>IDENTIFICATION IN INTER-ALPHA-INHIBITOR COMPLEX</scope>
    <scope>IDENTIFICATION BY MASS SPECTROMETRY</scope>
</reference>
<reference key="7">
    <citation type="journal article" date="1992" name="Biol. Chem. Hoppe-Seyler">
        <title>The heavy chains of human plasma inter-alpha-trypsin inhibitor: their isolation, their identification by electrophoresis and partial sequencing. Differential reactivity with concanavalin A.</title>
        <authorList>
            <person name="Malki N."/>
            <person name="Balduyck M."/>
            <person name="Maes P."/>
            <person name="Capon C."/>
            <person name="Mizon C."/>
            <person name="Han K.K."/>
            <person name="Tartar A."/>
            <person name="Fournet B."/>
            <person name="Mizon J."/>
        </authorList>
    </citation>
    <scope>PROTEIN SEQUENCE OF 55-64</scope>
    <source>
        <tissue>Plasma</tissue>
    </source>
</reference>
<reference key="8">
    <citation type="journal article" date="1993" name="J. Biol. Chem.">
        <title>Presence of the protein-glycosaminoglycan-protein covalent cross-link in the inter-alpha-inhibitor-related proteinase inhibitor heavy chain 2/bikunin.</title>
        <authorList>
            <person name="Enghild J.J."/>
            <person name="Salvesen G."/>
            <person name="Thoegersen I.B."/>
            <person name="Valnickova Z."/>
            <person name="Pizzo S.V."/>
            <person name="Hefta S.A."/>
        </authorList>
    </citation>
    <scope>PROTEIN SEQUENCE OF 55-64 AND 681-702</scope>
    <scope>CROSS-LINK STRUCTURE</scope>
    <scope>GLYCOSYLATION AT THR-691</scope>
</reference>
<reference key="9">
    <citation type="journal article" date="1994" name="Biochemistry">
        <title>TSG-6, an arthritis-associated hyaluronan binding protein, forms a stable complex with the serum protein inter-alpha-inhibitor.</title>
        <authorList>
            <person name="Wisniewski H.-G."/>
            <person name="Burgess W.H."/>
            <person name="Oppenheim J.D."/>
            <person name="Vilcek J."/>
        </authorList>
    </citation>
    <scope>PROTEIN SEQUENCE OF 55-64</scope>
    <scope>INTERACTION WITH TNFAIP6</scope>
</reference>
<reference key="10">
    <citation type="journal article" date="1993" name="J. Biol. Chem.">
        <title>A serum-derived hyaluronan-associated protein (SHAP) is the heavy chain of the inter alpha-trypsin inhibitor.</title>
        <authorList>
            <person name="Huang L."/>
            <person name="Yoneda M."/>
            <person name="Kimata K."/>
        </authorList>
    </citation>
    <scope>PROTEIN SEQUENCE OF 67-101</scope>
    <scope>HYALURONAN BINDING</scope>
    <source>
        <tissue>Serum</tissue>
    </source>
</reference>
<reference key="11">
    <citation type="journal article" date="1994" name="Eur. J. Biochem.">
        <title>Chondroitin sulphate covalently cross-links the three polypeptide chains of inter-alpha-trypsin inhibitor.</title>
        <authorList>
            <person name="Morelle W."/>
            <person name="Capon C."/>
            <person name="Balduyck M."/>
            <person name="Sautiere P."/>
            <person name="Kouach M."/>
            <person name="Michalski C."/>
            <person name="Fournet B."/>
            <person name="Mizon J."/>
        </authorList>
    </citation>
    <scope>PROTEIN SEQUENCE OF 699-702</scope>
    <scope>COVALENT LINKAGE WITH CHONDROITIN SULFATE</scope>
    <source>
        <tissue>Plasma</tissue>
    </source>
</reference>
<reference key="12">
    <citation type="journal article" date="1998" name="Biochem. J.">
        <title>Glycosylation pattern of human inter-alpha-inhibitor heavy chains.</title>
        <authorList>
            <person name="Flahaut C."/>
            <person name="Capon C."/>
            <person name="Balduyck M."/>
            <person name="Ricart G."/>
            <person name="Sautiere P."/>
            <person name="Mizon J."/>
        </authorList>
    </citation>
    <scope>GLYCOSYLATION AT ASN-118; THR-666; SER-673; THR-675 AND THR-691</scope>
    <scope>MASS SPECTROMETRY</scope>
</reference>
<reference key="13">
    <citation type="journal article" date="1998" name="Biochemistry">
        <title>Posttranslational modifications of human inter-alpha-inhibitor: identification of glycans and disulfide bridges in heavy chains 1 and 2.</title>
        <authorList>
            <person name="Olsen E.H.N."/>
            <person name="Rahbek-Nielsen H."/>
            <person name="Thoegersen I.B."/>
            <person name="Roepstorff P."/>
            <person name="Enghild J.J."/>
        </authorList>
    </citation>
    <scope>GLYCOSYLATION AT ASN-118; THR-666; SER-673; THR-675 AND THR-691</scope>
    <scope>DISULFIDE BONDS</scope>
</reference>
<reference key="14">
    <citation type="journal article" date="2003" name="Nat. Biotechnol.">
        <title>Identification and quantification of N-linked glycoproteins using hydrazide chemistry, stable isotope labeling and mass spectrometry.</title>
        <authorList>
            <person name="Zhang H."/>
            <person name="Li X.-J."/>
            <person name="Martin D.B."/>
            <person name="Aebersold R."/>
        </authorList>
    </citation>
    <scope>GLYCOSYLATION AT ASN-118</scope>
</reference>
<reference key="15">
    <citation type="journal article" date="2005" name="J. Proteome Res.">
        <title>Human plasma N-glycoproteome analysis by immunoaffinity subtraction, hydrazide chemistry, and mass spectrometry.</title>
        <authorList>
            <person name="Liu T."/>
            <person name="Qian W.-J."/>
            <person name="Gritsenko M.A."/>
            <person name="Camp D.G. II"/>
            <person name="Monroe M.E."/>
            <person name="Moore R.J."/>
            <person name="Smith R.D."/>
        </authorList>
    </citation>
    <scope>GLYCOSYLATION [LARGE SCALE ANALYSIS] AT ASN-118 AND ASN-445</scope>
    <source>
        <tissue>Plasma</tissue>
    </source>
</reference>
<reference key="16">
    <citation type="journal article" date="2009" name="J. Proteome Res.">
        <title>Glycoproteomics analysis of human liver tissue by combination of multiple enzyme digestion and hydrazide chemistry.</title>
        <authorList>
            <person name="Chen R."/>
            <person name="Jiang X."/>
            <person name="Sun D."/>
            <person name="Han G."/>
            <person name="Wang F."/>
            <person name="Ye M."/>
            <person name="Wang L."/>
            <person name="Zou H."/>
        </authorList>
    </citation>
    <scope>GLYCOSYLATION [LARGE SCALE ANALYSIS] AT ASN-118</scope>
    <source>
        <tissue>Liver</tissue>
    </source>
</reference>
<reference key="17">
    <citation type="journal article" date="2011" name="BMC Syst. Biol.">
        <title>Initial characterization of the human central proteome.</title>
        <authorList>
            <person name="Burkard T.R."/>
            <person name="Planyavsky M."/>
            <person name="Kaupe I."/>
            <person name="Breitwieser F.P."/>
            <person name="Buerckstuemmer T."/>
            <person name="Bennett K.L."/>
            <person name="Superti-Furga G."/>
            <person name="Colinge J."/>
        </authorList>
    </citation>
    <scope>IDENTIFICATION BY MASS SPECTROMETRY [LARGE SCALE ANALYSIS]</scope>
</reference>
<reference key="18">
    <citation type="journal article" date="2012" name="Mol. Cell. Proteomics">
        <title>Human urinary glycoproteomics; attachment site specific analysis of N- and O-linked glycosylations by CID and ECD.</title>
        <authorList>
            <person name="Halim A."/>
            <person name="Nilsson J."/>
            <person name="Ruetschi U."/>
            <person name="Hesse C."/>
            <person name="Larson G."/>
        </authorList>
    </citation>
    <scope>GLYCOSYLATION</scope>
    <scope>STRUCTURE OF CARBOHYDRATES</scope>
    <scope>IDENTIFICATION BY MASS SPECTROMETRY</scope>
</reference>
<reference key="19">
    <citation type="journal article" date="2014" name="J. Proteomics">
        <title>An enzyme assisted RP-RPLC approach for in-depth analysis of human liver phosphoproteome.</title>
        <authorList>
            <person name="Bian Y."/>
            <person name="Song C."/>
            <person name="Cheng K."/>
            <person name="Dong M."/>
            <person name="Wang F."/>
            <person name="Huang J."/>
            <person name="Sun D."/>
            <person name="Wang L."/>
            <person name="Ye M."/>
            <person name="Zou H."/>
        </authorList>
    </citation>
    <scope>PHOSPHORYLATION [LARGE SCALE ANALYSIS] AT SER-60</scope>
    <scope>IDENTIFICATION BY MASS SPECTROMETRY [LARGE SCALE ANALYSIS]</scope>
    <source>
        <tissue>Liver</tissue>
    </source>
</reference>
<reference key="20">
    <citation type="journal article" date="2015" name="Cell">
        <title>A single kinase generates the majority of the secreted phosphoproteome.</title>
        <authorList>
            <person name="Tagliabracci V.S."/>
            <person name="Wiley S.E."/>
            <person name="Guo X."/>
            <person name="Kinch L.N."/>
            <person name="Durrant E."/>
            <person name="Wen J."/>
            <person name="Xiao J."/>
            <person name="Cui J."/>
            <person name="Nguyen K.B."/>
            <person name="Engel J.L."/>
            <person name="Coon J.J."/>
            <person name="Grishin N."/>
            <person name="Pinna L.A."/>
            <person name="Pagliarini D.J."/>
            <person name="Dixon J.E."/>
        </authorList>
    </citation>
    <scope>PHOSPHORYLATION AT SER-60; SER-466 AND SER-886</scope>
</reference>
<organism>
    <name type="scientific">Homo sapiens</name>
    <name type="common">Human</name>
    <dbReference type="NCBI Taxonomy" id="9606"/>
    <lineage>
        <taxon>Eukaryota</taxon>
        <taxon>Metazoa</taxon>
        <taxon>Chordata</taxon>
        <taxon>Craniata</taxon>
        <taxon>Vertebrata</taxon>
        <taxon>Euteleostomi</taxon>
        <taxon>Mammalia</taxon>
        <taxon>Eutheria</taxon>
        <taxon>Euarchontoglires</taxon>
        <taxon>Primates</taxon>
        <taxon>Haplorrhini</taxon>
        <taxon>Catarrhini</taxon>
        <taxon>Hominidae</taxon>
        <taxon>Homo</taxon>
    </lineage>
</organism>
<protein>
    <recommendedName>
        <fullName>Inter-alpha-trypsin inhibitor heavy chain H2</fullName>
        <shortName>ITI heavy chain H2</shortName>
        <shortName>ITI-HC2</shortName>
        <shortName>Inter-alpha-inhibitor heavy chain 2</shortName>
    </recommendedName>
    <alternativeName>
        <fullName>Inter-alpha-trypsin inhibitor complex component II</fullName>
    </alternativeName>
    <alternativeName>
        <fullName>Serum-derived hyaluronan-associated protein</fullName>
        <shortName>SHAP</shortName>
    </alternativeName>
</protein>
<sequence length="946" mass="106463">MKRLTCFFICFFLSEVSGFEIPINGLSEFVDYEDLVELAPGKFQLVAENRRYQRSLPGESEEMMEEVDQVTLYSYKVQSTITSRMATTMIQSKVVNNSPQPQNVVFDVQIPKGAFISNFSMTVDGKTFRSSIKEKTVGRALYAQARAKGKTAGLVRSSALDMENFRTEVNVLPGAKVQFELHYQEVKWRKLGSYEHRIYLQPGRLAKHLEVDVWVIEPQGLRFLHVPDTFEGHFDGVPVISKGQQKAHVSFKPTVAQQRICPNCRETAVDGELVVLYDVKREEKAGELEVFNGYFVHFFAPDNLDPIPKNILFVIDVSGSMWGVKMKQTVEAMKTILDDLRAEDHFSVIDFNQNIRTWRNDLISATKTQVADAKRYIEKIQPSGGTNINEALLRAIFILNEANNLGLLDPNSVSLIILVSDGDPTVGELKLSKIQKNVKENIQDNISLFSLGMGFDVDYDFLKRLSNENHGIAQRIYGNQDTSSQLKKFYNQVSTPLLRNVQFNYPHTSVTDVTQNNFHNYFGGSEIVVAGKFDPAKLDQIESVITATSANTQLVLETLAQMDDLQDFLSKDKHADPDFTRKLWAYLTINQLLAERSLAPTAAAKRRITRSILQMSLDHHIVTPLTSLVIENEAGDERMLADAPPQDPSCCSGALYYGSKVVPDSTPSWANPSPTPVISMLAQGSQVLESTPPPHVMRVENDPHFIIYLPKSQKNICFNIDSEPGKILNLVSDPESGIVVNGQLVGAKKPNNGKLSTYFGKLGFYFQSEDIKIEISTETITLSHGSSTFSLSWSDTAQVTNQRVQISVKKEKVVTITLDKEMSFSVLLHRVWKKHPVNVDFLGIYIPPTNKFSPKAHGLIGQFMQEPKIHIFNERPGKDPEKPEASMEVKGQKLIITRGLQKDYRTDLVFGTDVTCWFVHNSGKGFIDGHYKDYFVPQLYSFLKRP</sequence>
<evidence type="ECO:0000250" key="1"/>
<evidence type="ECO:0000255" key="2"/>
<evidence type="ECO:0000255" key="3">
    <source>
        <dbReference type="PROSITE-ProRule" id="PRU00219"/>
    </source>
</evidence>
<evidence type="ECO:0000255" key="4">
    <source>
        <dbReference type="PROSITE-ProRule" id="PRU00801"/>
    </source>
</evidence>
<evidence type="ECO:0000269" key="5">
    <source>
    </source>
</evidence>
<evidence type="ECO:0000269" key="6">
    <source>
    </source>
</evidence>
<evidence type="ECO:0000269" key="7">
    <source>
    </source>
</evidence>
<evidence type="ECO:0000269" key="8">
    <source>
    </source>
</evidence>
<evidence type="ECO:0000269" key="9">
    <source>
    </source>
</evidence>
<evidence type="ECO:0000269" key="10">
    <source>
    </source>
</evidence>
<evidence type="ECO:0000269" key="11">
    <source>
    </source>
</evidence>
<evidence type="ECO:0000269" key="12">
    <source>
    </source>
</evidence>
<evidence type="ECO:0000269" key="13">
    <source>
    </source>
</evidence>
<evidence type="ECO:0000269" key="14">
    <source>
    </source>
</evidence>
<evidence type="ECO:0000269" key="15">
    <source>
    </source>
</evidence>
<evidence type="ECO:0000305" key="16"/>
<evidence type="ECO:0007744" key="17">
    <source>
    </source>
</evidence>
<gene>
    <name type="primary">ITIH2</name>
    <name type="synonym">IGHEP2</name>
</gene>
<name>ITIH2_HUMAN</name>
<comment type="function">
    <text>May act as a carrier of hyaluronan in serum or as a binding protein between hyaluronan and other matrix protein, including those on cell surfaces in tissues to regulate the localization, synthesis and degradation of hyaluronan which are essential to cells undergoing biological processes.</text>
</comment>
<comment type="subunit">
    <text evidence="11">I-alpha-I plasma protease inhibitors are assembled from one or two heavy chains (HC) and one light chain, bikunin. Inter-alpha-inhibitor (I-alpha-I) is composed of ITIH1/HC1, ITIH2/HC2 and bikunin.</text>
</comment>
<comment type="subcellular location">
    <subcellularLocation>
        <location>Secreted</location>
    </subcellularLocation>
</comment>
<comment type="tissue specificity">
    <text>Plasma.</text>
</comment>
<comment type="PTM">
    <text evidence="1">Heavy chains are linked to bikunin via chondroitin 4-sulfate esterified to the alpha-carboxyl of the C-terminal aspartate after propeptide cleavage.</text>
</comment>
<comment type="PTM">
    <text evidence="5 6 7 8 13 14 15">N- and O-glycosylated. O-glycosylated with core 1 or possibly core 8 glycans.</text>
</comment>
<comment type="PTM">
    <text evidence="12">Phosphorylated by FAM20C in the extracellular medium.</text>
</comment>
<comment type="mass spectrometry" mass="76508.0" method="MALDI" evidence="15"/>
<comment type="similarity">
    <text evidence="16">Belongs to the ITIH family.</text>
</comment>
<comment type="sequence caution" evidence="16">
    <conflict type="frameshift">
        <sequence resource="EMBL-CDS" id="CAA30160"/>
    </conflict>
</comment>
<dbReference type="EMBL" id="X07173">
    <property type="protein sequence ID" value="CAA30160.1"/>
    <property type="status" value="ALT_FRAME"/>
    <property type="molecule type" value="mRNA"/>
</dbReference>
<dbReference type="EMBL" id="AL158044">
    <property type="status" value="NOT_ANNOTATED_CDS"/>
    <property type="molecule type" value="Genomic_DNA"/>
</dbReference>
<dbReference type="EMBL" id="M18193">
    <property type="protein sequence ID" value="AAA60558.1"/>
    <property type="molecule type" value="mRNA"/>
</dbReference>
<dbReference type="EMBL" id="M33033">
    <property type="protein sequence ID" value="AAA59195.1"/>
    <property type="molecule type" value="mRNA"/>
</dbReference>
<dbReference type="CCDS" id="CCDS31141.1"/>
<dbReference type="PIR" id="S00346">
    <property type="entry name" value="IYHU2"/>
</dbReference>
<dbReference type="RefSeq" id="NP_002207.2">
    <property type="nucleotide sequence ID" value="NM_002216.3"/>
</dbReference>
<dbReference type="SMR" id="P19823"/>
<dbReference type="BioGRID" id="109904">
    <property type="interactions" value="98"/>
</dbReference>
<dbReference type="FunCoup" id="P19823">
    <property type="interactions" value="283"/>
</dbReference>
<dbReference type="IntAct" id="P19823">
    <property type="interactions" value="75"/>
</dbReference>
<dbReference type="STRING" id="9606.ENSP00000351190"/>
<dbReference type="ChEMBL" id="CHEMBL4295727"/>
<dbReference type="DrugBank" id="DB09130">
    <property type="generic name" value="Copper"/>
</dbReference>
<dbReference type="DrugBank" id="DB01593">
    <property type="generic name" value="Zinc"/>
</dbReference>
<dbReference type="DrugBank" id="DB14487">
    <property type="generic name" value="Zinc acetate"/>
</dbReference>
<dbReference type="DrugBank" id="DB14533">
    <property type="generic name" value="Zinc chloride"/>
</dbReference>
<dbReference type="DrugBank" id="DB14548">
    <property type="generic name" value="Zinc sulfate, unspecified form"/>
</dbReference>
<dbReference type="GlyConnect" id="285">
    <property type="glycosylation" value="16 N-Linked glycans (2 sites), 5 O-Linked glycans (4 sites)"/>
</dbReference>
<dbReference type="GlyCosmos" id="P19823">
    <property type="glycosylation" value="12 sites, 32 glycans"/>
</dbReference>
<dbReference type="GlyGen" id="P19823">
    <property type="glycosylation" value="18 sites, 46 N-linked glycans (3 sites), 16 O-linked glycans (14 sites)"/>
</dbReference>
<dbReference type="iPTMnet" id="P19823"/>
<dbReference type="PhosphoSitePlus" id="P19823"/>
<dbReference type="BioMuta" id="ITIH2"/>
<dbReference type="DMDM" id="229462889"/>
<dbReference type="CPTAC" id="CPTAC-676"/>
<dbReference type="CPTAC" id="non-CPTAC-1134"/>
<dbReference type="jPOST" id="P19823"/>
<dbReference type="MassIVE" id="P19823"/>
<dbReference type="PaxDb" id="9606-ENSP00000351190"/>
<dbReference type="PeptideAtlas" id="P19823"/>
<dbReference type="ProteomicsDB" id="53690"/>
<dbReference type="Antibodypedia" id="24443">
    <property type="antibodies" value="112 antibodies from 24 providers"/>
</dbReference>
<dbReference type="DNASU" id="3698"/>
<dbReference type="Ensembl" id="ENST00000358415.9">
    <property type="protein sequence ID" value="ENSP00000351190.4"/>
    <property type="gene ID" value="ENSG00000151655.19"/>
</dbReference>
<dbReference type="GeneID" id="3698"/>
<dbReference type="KEGG" id="hsa:3698"/>
<dbReference type="MANE-Select" id="ENST00000358415.9">
    <property type="protein sequence ID" value="ENSP00000351190.4"/>
    <property type="RefSeq nucleotide sequence ID" value="NM_002216.3"/>
    <property type="RefSeq protein sequence ID" value="NP_002207.2"/>
</dbReference>
<dbReference type="UCSC" id="uc001ijs.4">
    <property type="organism name" value="human"/>
</dbReference>
<dbReference type="AGR" id="HGNC:6167"/>
<dbReference type="CTD" id="3698"/>
<dbReference type="DisGeNET" id="3698"/>
<dbReference type="GeneCards" id="ITIH2"/>
<dbReference type="HGNC" id="HGNC:6167">
    <property type="gene designation" value="ITIH2"/>
</dbReference>
<dbReference type="HPA" id="ENSG00000151655">
    <property type="expression patterns" value="Tissue enriched (liver)"/>
</dbReference>
<dbReference type="MIM" id="146640">
    <property type="type" value="gene"/>
</dbReference>
<dbReference type="neXtProt" id="NX_P19823"/>
<dbReference type="OpenTargets" id="ENSG00000151655"/>
<dbReference type="PharmGKB" id="PA29965"/>
<dbReference type="VEuPathDB" id="HostDB:ENSG00000151655"/>
<dbReference type="eggNOG" id="ENOG502QPS2">
    <property type="taxonomic scope" value="Eukaryota"/>
</dbReference>
<dbReference type="GeneTree" id="ENSGT00940000157945"/>
<dbReference type="InParanoid" id="P19823"/>
<dbReference type="OMA" id="AKQMWAY"/>
<dbReference type="OrthoDB" id="299997at2759"/>
<dbReference type="PAN-GO" id="P19823">
    <property type="GO annotations" value="0 GO annotations based on evolutionary models"/>
</dbReference>
<dbReference type="PhylomeDB" id="P19823"/>
<dbReference type="TreeFam" id="TF328982"/>
<dbReference type="PathwayCommons" id="P19823"/>
<dbReference type="Reactome" id="R-HSA-381426">
    <property type="pathway name" value="Regulation of Insulin-like Growth Factor (IGF) transport and uptake by Insulin-like Growth Factor Binding Proteins (IGFBPs)"/>
</dbReference>
<dbReference type="Reactome" id="R-HSA-8957275">
    <property type="pathway name" value="Post-translational protein phosphorylation"/>
</dbReference>
<dbReference type="SignaLink" id="P19823"/>
<dbReference type="BioGRID-ORCS" id="3698">
    <property type="hits" value="12 hits in 1143 CRISPR screens"/>
</dbReference>
<dbReference type="ChiTaRS" id="ITIH2">
    <property type="organism name" value="human"/>
</dbReference>
<dbReference type="GeneWiki" id="ITIH2"/>
<dbReference type="GenomeRNAi" id="3698"/>
<dbReference type="Pharos" id="P19823">
    <property type="development level" value="Tbio"/>
</dbReference>
<dbReference type="PRO" id="PR:P19823"/>
<dbReference type="Proteomes" id="UP000005640">
    <property type="component" value="Chromosome 10"/>
</dbReference>
<dbReference type="RNAct" id="P19823">
    <property type="molecule type" value="protein"/>
</dbReference>
<dbReference type="Bgee" id="ENSG00000151655">
    <property type="expression patterns" value="Expressed in liver and 116 other cell types or tissues"/>
</dbReference>
<dbReference type="ExpressionAtlas" id="P19823">
    <property type="expression patterns" value="baseline and differential"/>
</dbReference>
<dbReference type="GO" id="GO:0072562">
    <property type="term" value="C:blood microparticle"/>
    <property type="evidence" value="ECO:0007005"/>
    <property type="project" value="UniProtKB"/>
</dbReference>
<dbReference type="GO" id="GO:0062023">
    <property type="term" value="C:collagen-containing extracellular matrix"/>
    <property type="evidence" value="ECO:0007005"/>
    <property type="project" value="BHF-UCL"/>
</dbReference>
<dbReference type="GO" id="GO:0005788">
    <property type="term" value="C:endoplasmic reticulum lumen"/>
    <property type="evidence" value="ECO:0000304"/>
    <property type="project" value="Reactome"/>
</dbReference>
<dbReference type="GO" id="GO:0070062">
    <property type="term" value="C:extracellular exosome"/>
    <property type="evidence" value="ECO:0007005"/>
    <property type="project" value="UniProtKB"/>
</dbReference>
<dbReference type="GO" id="GO:0005576">
    <property type="term" value="C:extracellular region"/>
    <property type="evidence" value="ECO:0000303"/>
    <property type="project" value="UniProtKB"/>
</dbReference>
<dbReference type="GO" id="GO:0004866">
    <property type="term" value="F:endopeptidase inhibitor activity"/>
    <property type="evidence" value="ECO:0000304"/>
    <property type="project" value="ProtInc"/>
</dbReference>
<dbReference type="GO" id="GO:0005540">
    <property type="term" value="F:hyaluronic acid binding"/>
    <property type="evidence" value="ECO:0000314"/>
    <property type="project" value="UniProtKB"/>
</dbReference>
<dbReference type="GO" id="GO:0004867">
    <property type="term" value="F:serine-type endopeptidase inhibitor activity"/>
    <property type="evidence" value="ECO:0007669"/>
    <property type="project" value="UniProtKB-KW"/>
</dbReference>
<dbReference type="GO" id="GO:0030212">
    <property type="term" value="P:hyaluronan metabolic process"/>
    <property type="evidence" value="ECO:0007669"/>
    <property type="project" value="InterPro"/>
</dbReference>
<dbReference type="CDD" id="cd01461">
    <property type="entry name" value="vWA_interalpha_trypsin_inhibitor"/>
    <property type="match status" value="1"/>
</dbReference>
<dbReference type="FunFam" id="3.40.50.410:FF:000013">
    <property type="entry name" value="inter-alpha-trypsin inhibitor heavy chain H2"/>
    <property type="match status" value="1"/>
</dbReference>
<dbReference type="Gene3D" id="3.40.50.410">
    <property type="entry name" value="von Willebrand factor, type A domain"/>
    <property type="match status" value="1"/>
</dbReference>
<dbReference type="InterPro" id="IPR010600">
    <property type="entry name" value="ITI_HC_C"/>
</dbReference>
<dbReference type="InterPro" id="IPR050934">
    <property type="entry name" value="ITIH"/>
</dbReference>
<dbReference type="InterPro" id="IPR013694">
    <property type="entry name" value="VIT"/>
</dbReference>
<dbReference type="InterPro" id="IPR002035">
    <property type="entry name" value="VWF_A"/>
</dbReference>
<dbReference type="InterPro" id="IPR036465">
    <property type="entry name" value="vWFA_dom_sf"/>
</dbReference>
<dbReference type="PANTHER" id="PTHR10338">
    <property type="entry name" value="INTER-ALPHA-TRYPSIN INHIBITOR HEAVY CHAIN FAMILY MEMBER"/>
    <property type="match status" value="1"/>
</dbReference>
<dbReference type="PANTHER" id="PTHR10338:SF14">
    <property type="entry name" value="INTER-ALPHA-TRYPSIN INHIBITOR HEAVY CHAIN H2"/>
    <property type="match status" value="1"/>
</dbReference>
<dbReference type="Pfam" id="PF06668">
    <property type="entry name" value="ITI_HC_C"/>
    <property type="match status" value="1"/>
</dbReference>
<dbReference type="Pfam" id="PF08487">
    <property type="entry name" value="VIT"/>
    <property type="match status" value="1"/>
</dbReference>
<dbReference type="Pfam" id="PF00092">
    <property type="entry name" value="VWA"/>
    <property type="match status" value="1"/>
</dbReference>
<dbReference type="SMART" id="SM00609">
    <property type="entry name" value="VIT"/>
    <property type="match status" value="1"/>
</dbReference>
<dbReference type="SMART" id="SM00327">
    <property type="entry name" value="VWA"/>
    <property type="match status" value="1"/>
</dbReference>
<dbReference type="SUPFAM" id="SSF53300">
    <property type="entry name" value="vWA-like"/>
    <property type="match status" value="1"/>
</dbReference>
<dbReference type="PROSITE" id="PS51468">
    <property type="entry name" value="VIT"/>
    <property type="match status" value="1"/>
</dbReference>
<dbReference type="PROSITE" id="PS50234">
    <property type="entry name" value="VWFA"/>
    <property type="match status" value="1"/>
</dbReference>